<sequence length="467" mass="53210">MLSTKTLPSSKAQESLQSPTKGSYWITTFGCQMNKADSERMAGILERMGYKQAEEELQADLVLYNTCTIRDNAEQKVYSYLGRQALRKKLFPQLKLIVAGCVAQQEGESLLRRVPELDLVMGPQHANRLETLLNKVETGQQVLATEELYIIEDLTTARRDSSICAWVNVIYGCNERCTYCVVPSVRGKEQSRTPPAIKREIENLANTGFKEVTLLGQNIDAYGRDLPGTTPQGRKKNTLTDLLYYIHDIEGIERIRFATSHPRYFTSRLIEACAELPKVCEHFHIPFQSGDDEILNQMRRGYKIKTYKKIIGRIRELMPNASITADVIVAFPGETNEQFQRSLSLVEEIGFDQLNTAAYSPRPNTPAALWPNQIPEEIKIERLRKLNSLVEIKAKERNVRYKDRVEEVLAENTNPKDKQQLMGRTRTNRLTFFPKVDNQGNSYKPGDLVKVRVKDIRAFSLSGVIEN</sequence>
<evidence type="ECO:0000255" key="1">
    <source>
        <dbReference type="HAMAP-Rule" id="MF_01864"/>
    </source>
</evidence>
<evidence type="ECO:0000255" key="2">
    <source>
        <dbReference type="PROSITE-ProRule" id="PRU01266"/>
    </source>
</evidence>
<organism>
    <name type="scientific">Prochlorococcus marinus (strain MIT 9211)</name>
    <dbReference type="NCBI Taxonomy" id="93059"/>
    <lineage>
        <taxon>Bacteria</taxon>
        <taxon>Bacillati</taxon>
        <taxon>Cyanobacteriota</taxon>
        <taxon>Cyanophyceae</taxon>
        <taxon>Synechococcales</taxon>
        <taxon>Prochlorococcaceae</taxon>
        <taxon>Prochlorococcus</taxon>
    </lineage>
</organism>
<gene>
    <name evidence="1" type="primary">miaB</name>
    <name type="ordered locus">P9211_13531</name>
</gene>
<name>MIAB_PROM4</name>
<protein>
    <recommendedName>
        <fullName evidence="1">tRNA-2-methylthio-N(6)-dimethylallyladenosine synthase</fullName>
        <ecNumber evidence="1">2.8.4.3</ecNumber>
    </recommendedName>
    <alternativeName>
        <fullName evidence="1">(Dimethylallyl)adenosine tRNA methylthiotransferase MiaB</fullName>
    </alternativeName>
    <alternativeName>
        <fullName evidence="1">tRNA-i(6)A37 methylthiotransferase</fullName>
    </alternativeName>
</protein>
<reference key="1">
    <citation type="journal article" date="2007" name="PLoS Genet.">
        <title>Patterns and implications of gene gain and loss in the evolution of Prochlorococcus.</title>
        <authorList>
            <person name="Kettler G.C."/>
            <person name="Martiny A.C."/>
            <person name="Huang K."/>
            <person name="Zucker J."/>
            <person name="Coleman M.L."/>
            <person name="Rodrigue S."/>
            <person name="Chen F."/>
            <person name="Lapidus A."/>
            <person name="Ferriera S."/>
            <person name="Johnson J."/>
            <person name="Steglich C."/>
            <person name="Church G.M."/>
            <person name="Richardson P."/>
            <person name="Chisholm S.W."/>
        </authorList>
    </citation>
    <scope>NUCLEOTIDE SEQUENCE [LARGE SCALE GENOMIC DNA]</scope>
    <source>
        <strain>MIT 9211</strain>
    </source>
</reference>
<dbReference type="EC" id="2.8.4.3" evidence="1"/>
<dbReference type="EMBL" id="CP000878">
    <property type="protein sequence ID" value="ABX09284.1"/>
    <property type="molecule type" value="Genomic_DNA"/>
</dbReference>
<dbReference type="SMR" id="A9BBS2"/>
<dbReference type="STRING" id="93059.P9211_13531"/>
<dbReference type="KEGG" id="pmj:P9211_13531"/>
<dbReference type="eggNOG" id="COG0621">
    <property type="taxonomic scope" value="Bacteria"/>
</dbReference>
<dbReference type="HOGENOM" id="CLU_018697_2_2_3"/>
<dbReference type="OrthoDB" id="9805215at2"/>
<dbReference type="Proteomes" id="UP000000788">
    <property type="component" value="Chromosome"/>
</dbReference>
<dbReference type="GO" id="GO:0005737">
    <property type="term" value="C:cytoplasm"/>
    <property type="evidence" value="ECO:0007669"/>
    <property type="project" value="UniProtKB-SubCell"/>
</dbReference>
<dbReference type="GO" id="GO:0051539">
    <property type="term" value="F:4 iron, 4 sulfur cluster binding"/>
    <property type="evidence" value="ECO:0007669"/>
    <property type="project" value="UniProtKB-UniRule"/>
</dbReference>
<dbReference type="GO" id="GO:0046872">
    <property type="term" value="F:metal ion binding"/>
    <property type="evidence" value="ECO:0007669"/>
    <property type="project" value="UniProtKB-KW"/>
</dbReference>
<dbReference type="GO" id="GO:0035596">
    <property type="term" value="F:methylthiotransferase activity"/>
    <property type="evidence" value="ECO:0007669"/>
    <property type="project" value="InterPro"/>
</dbReference>
<dbReference type="GO" id="GO:0035600">
    <property type="term" value="P:tRNA methylthiolation"/>
    <property type="evidence" value="ECO:0007669"/>
    <property type="project" value="TreeGrafter"/>
</dbReference>
<dbReference type="CDD" id="cd01335">
    <property type="entry name" value="Radical_SAM"/>
    <property type="match status" value="1"/>
</dbReference>
<dbReference type="FunFam" id="3.40.50.12160:FF:000006">
    <property type="entry name" value="tRNA-2-methylthio-N(6)-dimethylallyladenosine synthase"/>
    <property type="match status" value="1"/>
</dbReference>
<dbReference type="FunFam" id="3.80.30.20:FF:000001">
    <property type="entry name" value="tRNA-2-methylthio-N(6)-dimethylallyladenosine synthase 2"/>
    <property type="match status" value="1"/>
</dbReference>
<dbReference type="Gene3D" id="3.40.50.12160">
    <property type="entry name" value="Methylthiotransferase, N-terminal domain"/>
    <property type="match status" value="1"/>
</dbReference>
<dbReference type="Gene3D" id="3.80.30.20">
    <property type="entry name" value="tm_1862 like domain"/>
    <property type="match status" value="1"/>
</dbReference>
<dbReference type="HAMAP" id="MF_01864">
    <property type="entry name" value="tRNA_metthiotr_MiaB"/>
    <property type="match status" value="1"/>
</dbReference>
<dbReference type="InterPro" id="IPR006638">
    <property type="entry name" value="Elp3/MiaA/NifB-like_rSAM"/>
</dbReference>
<dbReference type="InterPro" id="IPR005839">
    <property type="entry name" value="Methylthiotransferase"/>
</dbReference>
<dbReference type="InterPro" id="IPR020612">
    <property type="entry name" value="Methylthiotransferase_CS"/>
</dbReference>
<dbReference type="InterPro" id="IPR013848">
    <property type="entry name" value="Methylthiotransferase_N"/>
</dbReference>
<dbReference type="InterPro" id="IPR038135">
    <property type="entry name" value="Methylthiotransferase_N_sf"/>
</dbReference>
<dbReference type="InterPro" id="IPR006463">
    <property type="entry name" value="MiaB_methiolase"/>
</dbReference>
<dbReference type="InterPro" id="IPR007197">
    <property type="entry name" value="rSAM"/>
</dbReference>
<dbReference type="InterPro" id="IPR023404">
    <property type="entry name" value="rSAM_horseshoe"/>
</dbReference>
<dbReference type="InterPro" id="IPR002792">
    <property type="entry name" value="TRAM_dom"/>
</dbReference>
<dbReference type="NCBIfam" id="TIGR01574">
    <property type="entry name" value="miaB-methiolase"/>
    <property type="match status" value="1"/>
</dbReference>
<dbReference type="NCBIfam" id="TIGR00089">
    <property type="entry name" value="MiaB/RimO family radical SAM methylthiotransferase"/>
    <property type="match status" value="1"/>
</dbReference>
<dbReference type="PANTHER" id="PTHR43020">
    <property type="entry name" value="CDK5 REGULATORY SUBUNIT-ASSOCIATED PROTEIN 1"/>
    <property type="match status" value="1"/>
</dbReference>
<dbReference type="PANTHER" id="PTHR43020:SF2">
    <property type="entry name" value="MITOCHONDRIAL TRNA METHYLTHIOTRANSFERASE CDK5RAP1"/>
    <property type="match status" value="1"/>
</dbReference>
<dbReference type="Pfam" id="PF04055">
    <property type="entry name" value="Radical_SAM"/>
    <property type="match status" value="1"/>
</dbReference>
<dbReference type="Pfam" id="PF01938">
    <property type="entry name" value="TRAM"/>
    <property type="match status" value="1"/>
</dbReference>
<dbReference type="Pfam" id="PF00919">
    <property type="entry name" value="UPF0004"/>
    <property type="match status" value="1"/>
</dbReference>
<dbReference type="SFLD" id="SFLDF00273">
    <property type="entry name" value="(dimethylallyl)adenosine_tRNA"/>
    <property type="match status" value="1"/>
</dbReference>
<dbReference type="SFLD" id="SFLDG01082">
    <property type="entry name" value="B12-binding_domain_containing"/>
    <property type="match status" value="1"/>
</dbReference>
<dbReference type="SFLD" id="SFLDG01061">
    <property type="entry name" value="methylthiotransferase"/>
    <property type="match status" value="1"/>
</dbReference>
<dbReference type="SMART" id="SM00729">
    <property type="entry name" value="Elp3"/>
    <property type="match status" value="1"/>
</dbReference>
<dbReference type="SUPFAM" id="SSF102114">
    <property type="entry name" value="Radical SAM enzymes"/>
    <property type="match status" value="1"/>
</dbReference>
<dbReference type="PROSITE" id="PS51449">
    <property type="entry name" value="MTTASE_N"/>
    <property type="match status" value="1"/>
</dbReference>
<dbReference type="PROSITE" id="PS01278">
    <property type="entry name" value="MTTASE_RADICAL"/>
    <property type="match status" value="1"/>
</dbReference>
<dbReference type="PROSITE" id="PS51918">
    <property type="entry name" value="RADICAL_SAM"/>
    <property type="match status" value="1"/>
</dbReference>
<dbReference type="PROSITE" id="PS50926">
    <property type="entry name" value="TRAM"/>
    <property type="match status" value="1"/>
</dbReference>
<keyword id="KW-0004">4Fe-4S</keyword>
<keyword id="KW-0963">Cytoplasm</keyword>
<keyword id="KW-0408">Iron</keyword>
<keyword id="KW-0411">Iron-sulfur</keyword>
<keyword id="KW-0479">Metal-binding</keyword>
<keyword id="KW-1185">Reference proteome</keyword>
<keyword id="KW-0949">S-adenosyl-L-methionine</keyword>
<keyword id="KW-0808">Transferase</keyword>
<keyword id="KW-0819">tRNA processing</keyword>
<comment type="function">
    <text evidence="1">Catalyzes the methylthiolation of N6-(dimethylallyl)adenosine (i(6)A), leading to the formation of 2-methylthio-N6-(dimethylallyl)adenosine (ms(2)i(6)A) at position 37 in tRNAs that read codons beginning with uridine.</text>
</comment>
<comment type="catalytic activity">
    <reaction evidence="1">
        <text>N(6)-dimethylallyladenosine(37) in tRNA + (sulfur carrier)-SH + AH2 + 2 S-adenosyl-L-methionine = 2-methylsulfanyl-N(6)-dimethylallyladenosine(37) in tRNA + (sulfur carrier)-H + 5'-deoxyadenosine + L-methionine + A + S-adenosyl-L-homocysteine + 2 H(+)</text>
        <dbReference type="Rhea" id="RHEA:37067"/>
        <dbReference type="Rhea" id="RHEA-COMP:10375"/>
        <dbReference type="Rhea" id="RHEA-COMP:10376"/>
        <dbReference type="Rhea" id="RHEA-COMP:14737"/>
        <dbReference type="Rhea" id="RHEA-COMP:14739"/>
        <dbReference type="ChEBI" id="CHEBI:13193"/>
        <dbReference type="ChEBI" id="CHEBI:15378"/>
        <dbReference type="ChEBI" id="CHEBI:17319"/>
        <dbReference type="ChEBI" id="CHEBI:17499"/>
        <dbReference type="ChEBI" id="CHEBI:29917"/>
        <dbReference type="ChEBI" id="CHEBI:57844"/>
        <dbReference type="ChEBI" id="CHEBI:57856"/>
        <dbReference type="ChEBI" id="CHEBI:59789"/>
        <dbReference type="ChEBI" id="CHEBI:64428"/>
        <dbReference type="ChEBI" id="CHEBI:74415"/>
        <dbReference type="ChEBI" id="CHEBI:74417"/>
        <dbReference type="EC" id="2.8.4.3"/>
    </reaction>
</comment>
<comment type="cofactor">
    <cofactor evidence="1">
        <name>[4Fe-4S] cluster</name>
        <dbReference type="ChEBI" id="CHEBI:49883"/>
    </cofactor>
    <text evidence="1">Binds 2 [4Fe-4S] clusters. One cluster is coordinated with 3 cysteines and an exchangeable S-adenosyl-L-methionine.</text>
</comment>
<comment type="subunit">
    <text evidence="1">Monomer.</text>
</comment>
<comment type="subcellular location">
    <subcellularLocation>
        <location evidence="1">Cytoplasm</location>
    </subcellularLocation>
</comment>
<comment type="similarity">
    <text evidence="1">Belongs to the methylthiotransferase family. MiaB subfamily.</text>
</comment>
<proteinExistence type="inferred from homology"/>
<feature type="chain" id="PRO_0000374445" description="tRNA-2-methylthio-N(6)-dimethylallyladenosine synthase">
    <location>
        <begin position="1"/>
        <end position="467"/>
    </location>
</feature>
<feature type="domain" description="MTTase N-terminal" evidence="1">
    <location>
        <begin position="22"/>
        <end position="138"/>
    </location>
</feature>
<feature type="domain" description="Radical SAM core" evidence="2">
    <location>
        <begin position="159"/>
        <end position="396"/>
    </location>
</feature>
<feature type="domain" description="TRAM" evidence="1">
    <location>
        <begin position="399"/>
        <end position="467"/>
    </location>
</feature>
<feature type="binding site" evidence="1">
    <location>
        <position position="31"/>
    </location>
    <ligand>
        <name>[4Fe-4S] cluster</name>
        <dbReference type="ChEBI" id="CHEBI:49883"/>
        <label>1</label>
    </ligand>
</feature>
<feature type="binding site" evidence="1">
    <location>
        <position position="67"/>
    </location>
    <ligand>
        <name>[4Fe-4S] cluster</name>
        <dbReference type="ChEBI" id="CHEBI:49883"/>
        <label>1</label>
    </ligand>
</feature>
<feature type="binding site" evidence="1">
    <location>
        <position position="101"/>
    </location>
    <ligand>
        <name>[4Fe-4S] cluster</name>
        <dbReference type="ChEBI" id="CHEBI:49883"/>
        <label>1</label>
    </ligand>
</feature>
<feature type="binding site" evidence="1">
    <location>
        <position position="173"/>
    </location>
    <ligand>
        <name>[4Fe-4S] cluster</name>
        <dbReference type="ChEBI" id="CHEBI:49883"/>
        <label>2</label>
        <note>4Fe-4S-S-AdoMet</note>
    </ligand>
</feature>
<feature type="binding site" evidence="1">
    <location>
        <position position="177"/>
    </location>
    <ligand>
        <name>[4Fe-4S] cluster</name>
        <dbReference type="ChEBI" id="CHEBI:49883"/>
        <label>2</label>
        <note>4Fe-4S-S-AdoMet</note>
    </ligand>
</feature>
<feature type="binding site" evidence="1">
    <location>
        <position position="180"/>
    </location>
    <ligand>
        <name>[4Fe-4S] cluster</name>
        <dbReference type="ChEBI" id="CHEBI:49883"/>
        <label>2</label>
        <note>4Fe-4S-S-AdoMet</note>
    </ligand>
</feature>
<accession>A9BBS2</accession>